<dbReference type="EC" id="2.5.1.141" evidence="1"/>
<dbReference type="EMBL" id="AE010300">
    <property type="protein sequence ID" value="AAN47436.1"/>
    <property type="molecule type" value="Genomic_DNA"/>
</dbReference>
<dbReference type="RefSeq" id="NP_710418.1">
    <property type="nucleotide sequence ID" value="NC_004342.2"/>
</dbReference>
<dbReference type="SMR" id="Q8F9F8"/>
<dbReference type="FunCoup" id="Q8F9F8">
    <property type="interactions" value="360"/>
</dbReference>
<dbReference type="STRING" id="189518.LA_0237"/>
<dbReference type="PaxDb" id="189518-LA_0237"/>
<dbReference type="EnsemblBacteria" id="AAN47436">
    <property type="protein sequence ID" value="AAN47436"/>
    <property type="gene ID" value="LA_0237"/>
</dbReference>
<dbReference type="KEGG" id="lil:LA_0237"/>
<dbReference type="PATRIC" id="fig|189518.3.peg.238"/>
<dbReference type="HOGENOM" id="CLU_029631_0_2_12"/>
<dbReference type="InParanoid" id="Q8F9F8"/>
<dbReference type="OrthoDB" id="9814417at2"/>
<dbReference type="UniPathway" id="UPA00834">
    <property type="reaction ID" value="UER00712"/>
</dbReference>
<dbReference type="Proteomes" id="UP000001408">
    <property type="component" value="Chromosome I"/>
</dbReference>
<dbReference type="GO" id="GO:0005886">
    <property type="term" value="C:plasma membrane"/>
    <property type="evidence" value="ECO:0007669"/>
    <property type="project" value="UniProtKB-SubCell"/>
</dbReference>
<dbReference type="GO" id="GO:0008495">
    <property type="term" value="F:protoheme IX farnesyltransferase activity"/>
    <property type="evidence" value="ECO:0000318"/>
    <property type="project" value="GO_Central"/>
</dbReference>
<dbReference type="GO" id="GO:0006783">
    <property type="term" value="P:heme biosynthetic process"/>
    <property type="evidence" value="ECO:0000318"/>
    <property type="project" value="GO_Central"/>
</dbReference>
<dbReference type="GO" id="GO:0048034">
    <property type="term" value="P:heme O biosynthetic process"/>
    <property type="evidence" value="ECO:0007669"/>
    <property type="project" value="UniProtKB-UniRule"/>
</dbReference>
<dbReference type="CDD" id="cd13957">
    <property type="entry name" value="PT_UbiA_Cox10"/>
    <property type="match status" value="1"/>
</dbReference>
<dbReference type="FunFam" id="1.10.357.140:FF:000006">
    <property type="entry name" value="Protoheme IX farnesyltransferase, mitochondrial"/>
    <property type="match status" value="1"/>
</dbReference>
<dbReference type="Gene3D" id="1.10.357.140">
    <property type="entry name" value="UbiA prenyltransferase"/>
    <property type="match status" value="1"/>
</dbReference>
<dbReference type="HAMAP" id="MF_00154">
    <property type="entry name" value="CyoE_CtaB"/>
    <property type="match status" value="1"/>
</dbReference>
<dbReference type="InterPro" id="IPR006369">
    <property type="entry name" value="Protohaem_IX_farnesylTrfase"/>
</dbReference>
<dbReference type="InterPro" id="IPR000537">
    <property type="entry name" value="UbiA_prenyltransferase"/>
</dbReference>
<dbReference type="InterPro" id="IPR044878">
    <property type="entry name" value="UbiA_sf"/>
</dbReference>
<dbReference type="NCBIfam" id="TIGR01473">
    <property type="entry name" value="cyoE_ctaB"/>
    <property type="match status" value="1"/>
</dbReference>
<dbReference type="NCBIfam" id="NF003349">
    <property type="entry name" value="PRK04375.1-2"/>
    <property type="match status" value="1"/>
</dbReference>
<dbReference type="PANTHER" id="PTHR43448:SF7">
    <property type="entry name" value="4-HYDROXYBENZOATE SOLANESYLTRANSFERASE"/>
    <property type="match status" value="1"/>
</dbReference>
<dbReference type="PANTHER" id="PTHR43448">
    <property type="entry name" value="PROTOHEME IX FARNESYLTRANSFERASE, MITOCHONDRIAL"/>
    <property type="match status" value="1"/>
</dbReference>
<dbReference type="Pfam" id="PF01040">
    <property type="entry name" value="UbiA"/>
    <property type="match status" value="1"/>
</dbReference>
<accession>Q8F9F8</accession>
<organism>
    <name type="scientific">Leptospira interrogans serogroup Icterohaemorrhagiae serovar Lai (strain 56601)</name>
    <dbReference type="NCBI Taxonomy" id="189518"/>
    <lineage>
        <taxon>Bacteria</taxon>
        <taxon>Pseudomonadati</taxon>
        <taxon>Spirochaetota</taxon>
        <taxon>Spirochaetia</taxon>
        <taxon>Leptospirales</taxon>
        <taxon>Leptospiraceae</taxon>
        <taxon>Leptospira</taxon>
    </lineage>
</organism>
<feature type="chain" id="PRO_0000327069" description="Protoheme IX farnesyltransferase">
    <location>
        <begin position="1"/>
        <end position="289"/>
    </location>
</feature>
<feature type="transmembrane region" description="Helical" evidence="1">
    <location>
        <begin position="18"/>
        <end position="38"/>
    </location>
</feature>
<feature type="transmembrane region" description="Helical" evidence="1">
    <location>
        <begin position="40"/>
        <end position="60"/>
    </location>
</feature>
<feature type="transmembrane region" description="Helical" evidence="1">
    <location>
        <begin position="87"/>
        <end position="107"/>
    </location>
</feature>
<feature type="transmembrane region" description="Helical" evidence="1">
    <location>
        <begin position="111"/>
        <end position="131"/>
    </location>
</feature>
<feature type="transmembrane region" description="Helical" evidence="1">
    <location>
        <begin position="139"/>
        <end position="159"/>
    </location>
</feature>
<feature type="transmembrane region" description="Helical" evidence="1">
    <location>
        <begin position="168"/>
        <end position="188"/>
    </location>
</feature>
<feature type="transmembrane region" description="Helical" evidence="1">
    <location>
        <begin position="212"/>
        <end position="232"/>
    </location>
</feature>
<feature type="transmembrane region" description="Helical" evidence="1">
    <location>
        <begin position="234"/>
        <end position="254"/>
    </location>
</feature>
<feature type="transmembrane region" description="Helical" evidence="1">
    <location>
        <begin position="269"/>
        <end position="289"/>
    </location>
</feature>
<comment type="function">
    <text evidence="1">Converts heme B (protoheme IX) to heme O by substitution of the vinyl group on carbon 2 of heme B porphyrin ring with a hydroxyethyl farnesyl side group.</text>
</comment>
<comment type="catalytic activity">
    <reaction evidence="1">
        <text>heme b + (2E,6E)-farnesyl diphosphate + H2O = Fe(II)-heme o + diphosphate</text>
        <dbReference type="Rhea" id="RHEA:28070"/>
        <dbReference type="ChEBI" id="CHEBI:15377"/>
        <dbReference type="ChEBI" id="CHEBI:33019"/>
        <dbReference type="ChEBI" id="CHEBI:60344"/>
        <dbReference type="ChEBI" id="CHEBI:60530"/>
        <dbReference type="ChEBI" id="CHEBI:175763"/>
        <dbReference type="EC" id="2.5.1.141"/>
    </reaction>
</comment>
<comment type="pathway">
    <text evidence="1">Porphyrin-containing compound metabolism; heme O biosynthesis; heme O from protoheme: step 1/1.</text>
</comment>
<comment type="subcellular location">
    <subcellularLocation>
        <location evidence="1">Cell inner membrane</location>
        <topology evidence="1">Multi-pass membrane protein</topology>
    </subcellularLocation>
</comment>
<comment type="miscellaneous">
    <text evidence="1">Carbon 2 of the heme B porphyrin ring is defined according to the Fischer nomenclature.</text>
</comment>
<comment type="similarity">
    <text evidence="1">Belongs to the UbiA prenyltransferase family. Protoheme IX farnesyltransferase subfamily.</text>
</comment>
<evidence type="ECO:0000255" key="1">
    <source>
        <dbReference type="HAMAP-Rule" id="MF_00154"/>
    </source>
</evidence>
<reference key="1">
    <citation type="journal article" date="2003" name="Nature">
        <title>Unique physiological and pathogenic features of Leptospira interrogans revealed by whole-genome sequencing.</title>
        <authorList>
            <person name="Ren S.-X."/>
            <person name="Fu G."/>
            <person name="Jiang X.-G."/>
            <person name="Zeng R."/>
            <person name="Miao Y.-G."/>
            <person name="Xu H."/>
            <person name="Zhang Y.-X."/>
            <person name="Xiong H."/>
            <person name="Lu G."/>
            <person name="Lu L.-F."/>
            <person name="Jiang H.-Q."/>
            <person name="Jia J."/>
            <person name="Tu Y.-F."/>
            <person name="Jiang J.-X."/>
            <person name="Gu W.-Y."/>
            <person name="Zhang Y.-Q."/>
            <person name="Cai Z."/>
            <person name="Sheng H.-H."/>
            <person name="Yin H.-F."/>
            <person name="Zhang Y."/>
            <person name="Zhu G.-F."/>
            <person name="Wan M."/>
            <person name="Huang H.-L."/>
            <person name="Qian Z."/>
            <person name="Wang S.-Y."/>
            <person name="Ma W."/>
            <person name="Yao Z.-J."/>
            <person name="Shen Y."/>
            <person name="Qiang B.-Q."/>
            <person name="Xia Q.-C."/>
            <person name="Guo X.-K."/>
            <person name="Danchin A."/>
            <person name="Saint Girons I."/>
            <person name="Somerville R.L."/>
            <person name="Wen Y.-M."/>
            <person name="Shi M.-H."/>
            <person name="Chen Z."/>
            <person name="Xu J.-G."/>
            <person name="Zhao G.-P."/>
        </authorList>
    </citation>
    <scope>NUCLEOTIDE SEQUENCE [LARGE SCALE GENOMIC DNA]</scope>
    <source>
        <strain>56601</strain>
    </source>
</reference>
<gene>
    <name evidence="1" type="primary">ctaB</name>
    <name type="ordered locus">LA_0237</name>
</gene>
<keyword id="KW-0997">Cell inner membrane</keyword>
<keyword id="KW-1003">Cell membrane</keyword>
<keyword id="KW-0350">Heme biosynthesis</keyword>
<keyword id="KW-0472">Membrane</keyword>
<keyword id="KW-1185">Reference proteome</keyword>
<keyword id="KW-0808">Transferase</keyword>
<keyword id="KW-0812">Transmembrane</keyword>
<keyword id="KW-1133">Transmembrane helix</keyword>
<proteinExistence type="inferred from homology"/>
<protein>
    <recommendedName>
        <fullName evidence="1">Protoheme IX farnesyltransferase</fullName>
        <ecNumber evidence="1">2.5.1.141</ecNumber>
    </recommendedName>
    <alternativeName>
        <fullName evidence="1">Heme B farnesyltransferase</fullName>
    </alternativeName>
    <alternativeName>
        <fullName evidence="1">Heme O synthase</fullName>
    </alternativeName>
</protein>
<name>COXX_LEPIN</name>
<sequence length="289" mass="32290">MASSTFFSDWNQMLKPRVTSLVLATIIPGLYLASEQSPSGFLIAITLFGTFLMSSASFIFNQVIEKDRDAKMKRTSNRPIPSGRISVVQATLVGIAMMGSSFYVLAVYVNLLTALCAFAALISYVFLYTIFLKPRTTQNIVIGGVAGCVGPLIGYAAIGNSLPVQAWSLFMMIFLWTPAHFWALAIFLKEEYSDADFPMLPVVKGIHQTTKSIFFYTILYSIACVSFYFLESSMGFLYLIVSLIVCIWMGILSYQLIQNPEPQSARKFFFFSILHLFIINITIVVDHLI</sequence>